<dbReference type="EMBL" id="CP001287">
    <property type="protein sequence ID" value="ACK67369.1"/>
    <property type="molecule type" value="Genomic_DNA"/>
</dbReference>
<dbReference type="RefSeq" id="WP_012596629.1">
    <property type="nucleotide sequence ID" value="NC_011726.1"/>
</dbReference>
<dbReference type="SMR" id="B7K085"/>
<dbReference type="STRING" id="41431.PCC8801_3401"/>
<dbReference type="KEGG" id="cyp:PCC8801_3401"/>
<dbReference type="eggNOG" id="ENOG5033A5A">
    <property type="taxonomic scope" value="Bacteria"/>
</dbReference>
<dbReference type="HOGENOM" id="CLU_212133_1_1_3"/>
<dbReference type="OrthoDB" id="532702at2"/>
<dbReference type="Proteomes" id="UP000008204">
    <property type="component" value="Chromosome"/>
</dbReference>
<dbReference type="GO" id="GO:0009522">
    <property type="term" value="C:photosystem I"/>
    <property type="evidence" value="ECO:0007669"/>
    <property type="project" value="UniProtKB-KW"/>
</dbReference>
<dbReference type="GO" id="GO:0031676">
    <property type="term" value="C:plasma membrane-derived thylakoid membrane"/>
    <property type="evidence" value="ECO:0007669"/>
    <property type="project" value="UniProtKB-SubCell"/>
</dbReference>
<dbReference type="GO" id="GO:0015979">
    <property type="term" value="P:photosynthesis"/>
    <property type="evidence" value="ECO:0007669"/>
    <property type="project" value="UniProtKB-UniRule"/>
</dbReference>
<dbReference type="Gene3D" id="1.20.5.510">
    <property type="entry name" value="Single helix bin"/>
    <property type="match status" value="1"/>
</dbReference>
<dbReference type="HAMAP" id="MF_00522">
    <property type="entry name" value="PSI_PsaJ"/>
    <property type="match status" value="1"/>
</dbReference>
<dbReference type="InterPro" id="IPR002615">
    <property type="entry name" value="PSI_PsaJ"/>
</dbReference>
<dbReference type="InterPro" id="IPR036062">
    <property type="entry name" value="PSI_PsaJ_sf"/>
</dbReference>
<dbReference type="NCBIfam" id="NF002743">
    <property type="entry name" value="PRK02733.1"/>
    <property type="match status" value="1"/>
</dbReference>
<dbReference type="PANTHER" id="PTHR36082">
    <property type="match status" value="1"/>
</dbReference>
<dbReference type="PANTHER" id="PTHR36082:SF2">
    <property type="entry name" value="PHOTOSYSTEM I REACTION CENTER SUBUNIT IX"/>
    <property type="match status" value="1"/>
</dbReference>
<dbReference type="Pfam" id="PF01701">
    <property type="entry name" value="PSI_PsaJ"/>
    <property type="match status" value="1"/>
</dbReference>
<dbReference type="SUPFAM" id="SSF81544">
    <property type="entry name" value="Subunit IX of photosystem I reaction centre, PsaJ"/>
    <property type="match status" value="1"/>
</dbReference>
<sequence>MEGLTKFLSTAPVLIMALLTFTAGLLIEFNRFYPDLLFHPLG</sequence>
<name>PSAJ_RIPO1</name>
<feature type="chain" id="PRO_1000127650" description="Photosystem I reaction center subunit IX">
    <location>
        <begin position="1"/>
        <end position="42"/>
    </location>
</feature>
<feature type="transmembrane region" description="Helical" evidence="1">
    <location>
        <begin position="7"/>
        <end position="27"/>
    </location>
</feature>
<proteinExistence type="inferred from homology"/>
<keyword id="KW-0472">Membrane</keyword>
<keyword id="KW-0602">Photosynthesis</keyword>
<keyword id="KW-0603">Photosystem I</keyword>
<keyword id="KW-1185">Reference proteome</keyword>
<keyword id="KW-0793">Thylakoid</keyword>
<keyword id="KW-0812">Transmembrane</keyword>
<keyword id="KW-1133">Transmembrane helix</keyword>
<organism>
    <name type="scientific">Rippkaea orientalis (strain PCC 8801 / RF-1)</name>
    <name type="common">Cyanothece sp. (strain PCC 8801)</name>
    <dbReference type="NCBI Taxonomy" id="41431"/>
    <lineage>
        <taxon>Bacteria</taxon>
        <taxon>Bacillati</taxon>
        <taxon>Cyanobacteriota</taxon>
        <taxon>Cyanophyceae</taxon>
        <taxon>Oscillatoriophycideae</taxon>
        <taxon>Chroococcales</taxon>
        <taxon>Aphanothecaceae</taxon>
        <taxon>Rippkaea</taxon>
        <taxon>Rippkaea orientalis</taxon>
    </lineage>
</organism>
<gene>
    <name evidence="1" type="primary">psaJ</name>
    <name type="ordered locus">PCC8801_3401</name>
</gene>
<protein>
    <recommendedName>
        <fullName evidence="1">Photosystem I reaction center subunit IX</fullName>
    </recommendedName>
</protein>
<comment type="function">
    <text evidence="1">May help in the organization of the PsaE and PsaF subunits.</text>
</comment>
<comment type="subcellular location">
    <subcellularLocation>
        <location evidence="1">Cellular thylakoid membrane</location>
        <topology evidence="1">Single-pass membrane protein</topology>
    </subcellularLocation>
</comment>
<comment type="similarity">
    <text evidence="1">Belongs to the PsaJ family.</text>
</comment>
<accession>B7K085</accession>
<evidence type="ECO:0000255" key="1">
    <source>
        <dbReference type="HAMAP-Rule" id="MF_00522"/>
    </source>
</evidence>
<reference key="1">
    <citation type="journal article" date="2011" name="MBio">
        <title>Novel metabolic attributes of the genus Cyanothece, comprising a group of unicellular nitrogen-fixing Cyanobacteria.</title>
        <authorList>
            <person name="Bandyopadhyay A."/>
            <person name="Elvitigala T."/>
            <person name="Welsh E."/>
            <person name="Stockel J."/>
            <person name="Liberton M."/>
            <person name="Min H."/>
            <person name="Sherman L.A."/>
            <person name="Pakrasi H.B."/>
        </authorList>
    </citation>
    <scope>NUCLEOTIDE SEQUENCE [LARGE SCALE GENOMIC DNA]</scope>
    <source>
        <strain>PCC 8801 / RF-1</strain>
    </source>
</reference>